<evidence type="ECO:0000255" key="1">
    <source>
        <dbReference type="HAMAP-Rule" id="MF_00346"/>
    </source>
</evidence>
<organism>
    <name type="scientific">Pseudomonas aeruginosa (strain UCBPP-PA14)</name>
    <dbReference type="NCBI Taxonomy" id="208963"/>
    <lineage>
        <taxon>Bacteria</taxon>
        <taxon>Pseudomonadati</taxon>
        <taxon>Pseudomonadota</taxon>
        <taxon>Gammaproteobacteria</taxon>
        <taxon>Pseudomonadales</taxon>
        <taxon>Pseudomonadaceae</taxon>
        <taxon>Pseudomonas</taxon>
    </lineage>
</organism>
<accession>Q02ED9</accession>
<feature type="chain" id="PRO_1000013045" description="UPF0149 protein PA14_69010">
    <location>
        <begin position="1"/>
        <end position="184"/>
    </location>
</feature>
<name>Y6901_PSEAB</name>
<gene>
    <name type="ordered locus">PA14_69010</name>
</gene>
<comment type="similarity">
    <text evidence="1">Belongs to the UPF0149 family.</text>
</comment>
<proteinExistence type="inferred from homology"/>
<sequence>MSTQNSAYSAFSSLLAEAAMPVSPAELHGHLLGRVCAGAGFDEAAWQHAAAELLGGAPGERLKAALSGLLGMVRQDFSAGEVAVVMLLPDDETPLAQRTEALGQWCQGFLAGFGLTAREGSLTGEAEEVLQDMAAIAQVQGQLEDSEDGETDYMEVMEYLRVAPLLLFAECGKPLEPAPKPSLH</sequence>
<protein>
    <recommendedName>
        <fullName evidence="1">UPF0149 protein PA14_69010</fullName>
    </recommendedName>
</protein>
<dbReference type="EMBL" id="CP000438">
    <property type="protein sequence ID" value="ABJ14608.1"/>
    <property type="molecule type" value="Genomic_DNA"/>
</dbReference>
<dbReference type="RefSeq" id="WP_003099193.1">
    <property type="nucleotide sequence ID" value="NZ_CP034244.1"/>
</dbReference>
<dbReference type="SMR" id="Q02ED9"/>
<dbReference type="KEGG" id="pau:PA14_69010"/>
<dbReference type="PseudoCAP" id="PA14_69010"/>
<dbReference type="HOGENOM" id="CLU_085336_0_0_6"/>
<dbReference type="BioCyc" id="PAER208963:G1G74-5814-MONOMER"/>
<dbReference type="Proteomes" id="UP000000653">
    <property type="component" value="Chromosome"/>
</dbReference>
<dbReference type="GO" id="GO:0005829">
    <property type="term" value="C:cytosol"/>
    <property type="evidence" value="ECO:0007669"/>
    <property type="project" value="TreeGrafter"/>
</dbReference>
<dbReference type="FunFam" id="1.20.120.740:FF:000003">
    <property type="entry name" value="UPF0149 protein PLES_56191"/>
    <property type="match status" value="1"/>
</dbReference>
<dbReference type="Gene3D" id="1.20.120.740">
    <property type="entry name" value="YgfB uncharacterised protein family UPF0149, PF03695"/>
    <property type="match status" value="1"/>
</dbReference>
<dbReference type="HAMAP" id="MF_00346">
    <property type="entry name" value="UPF0149"/>
    <property type="match status" value="1"/>
</dbReference>
<dbReference type="InterPro" id="IPR011978">
    <property type="entry name" value="YgfB-like"/>
</dbReference>
<dbReference type="InterPro" id="IPR036255">
    <property type="entry name" value="YgfB-like_sf"/>
</dbReference>
<dbReference type="NCBIfam" id="NF002562">
    <property type="entry name" value="PRK02166.1"/>
    <property type="match status" value="1"/>
</dbReference>
<dbReference type="PANTHER" id="PTHR37528">
    <property type="entry name" value="UPF0149 PROTEIN YGFB"/>
    <property type="match status" value="1"/>
</dbReference>
<dbReference type="PANTHER" id="PTHR37528:SF1">
    <property type="entry name" value="UPF0149 PROTEIN YGFB"/>
    <property type="match status" value="1"/>
</dbReference>
<dbReference type="Pfam" id="PF03695">
    <property type="entry name" value="UPF0149"/>
    <property type="match status" value="1"/>
</dbReference>
<dbReference type="SUPFAM" id="SSF101327">
    <property type="entry name" value="YgfB-like"/>
    <property type="match status" value="1"/>
</dbReference>
<reference key="1">
    <citation type="journal article" date="2006" name="Genome Biol.">
        <title>Genomic analysis reveals that Pseudomonas aeruginosa virulence is combinatorial.</title>
        <authorList>
            <person name="Lee D.G."/>
            <person name="Urbach J.M."/>
            <person name="Wu G."/>
            <person name="Liberati N.T."/>
            <person name="Feinbaum R.L."/>
            <person name="Miyata S."/>
            <person name="Diggins L.T."/>
            <person name="He J."/>
            <person name="Saucier M."/>
            <person name="Deziel E."/>
            <person name="Friedman L."/>
            <person name="Li L."/>
            <person name="Grills G."/>
            <person name="Montgomery K."/>
            <person name="Kucherlapati R."/>
            <person name="Rahme L.G."/>
            <person name="Ausubel F.M."/>
        </authorList>
    </citation>
    <scope>NUCLEOTIDE SEQUENCE [LARGE SCALE GENOMIC DNA]</scope>
    <source>
        <strain>UCBPP-PA14</strain>
    </source>
</reference>